<name>BMP7_MOUSE</name>
<reference key="1">
    <citation type="journal article" date="1991" name="Biochem. Biophys. Res. Commun.">
        <title>Murine osteogenic protein (OP-1): high levels of mRNA in kidney.</title>
        <authorList>
            <person name="Oezkaynak E."/>
            <person name="Schnegelsberg P.N.J."/>
            <person name="Oppermann H."/>
        </authorList>
    </citation>
    <scope>NUCLEOTIDE SEQUENCE [MRNA]</scope>
</reference>
<reference key="2">
    <citation type="journal article" date="2004" name="Genome Res.">
        <title>The status, quality, and expansion of the NIH full-length cDNA project: the Mammalian Gene Collection (MGC).</title>
        <authorList>
            <consortium name="The MGC Project Team"/>
        </authorList>
    </citation>
    <scope>NUCLEOTIDE SEQUENCE [LARGE SCALE MRNA]</scope>
    <source>
        <tissue>Colon</tissue>
    </source>
</reference>
<reference key="3">
    <citation type="journal article" date="1997" name="Exp. Cell Res.">
        <title>BMP7 null mutation in mice: developmental defects in skeleton, kidney, and eye.</title>
        <authorList>
            <person name="Jena N."/>
            <person name="Martin-Seisdedos C."/>
            <person name="McCue P."/>
            <person name="Croce C.M."/>
        </authorList>
    </citation>
    <scope>FUNCTION</scope>
    <scope>DISRUPTION PHENOTYPE</scope>
</reference>
<reference key="4">
    <citation type="journal article" date="2005" name="Development">
        <title>Sirenomelia in Bmp7 and Tsg compound mutant mice: requirement for Bmp signaling in the development of ventral posterior mesoderm.</title>
        <authorList>
            <person name="Zakin L."/>
            <person name="Reversade B."/>
            <person name="Kuroda H."/>
            <person name="Lyons K.M."/>
            <person name="De Robertis E.M."/>
        </authorList>
    </citation>
    <scope>INTERACTION WITH TWSG1</scope>
</reference>
<reference key="5">
    <citation type="journal article" date="2003" name="Dev. Biol.">
        <title>Identification of a secreted BMP antagonist, ectodin, integrating BMP, FGF, and SHH signals from the tooth enamel knot.</title>
        <authorList>
            <person name="Laurikkala J."/>
            <person name="Kassai Y."/>
            <person name="Pakkasjaervi L."/>
            <person name="Thesleff I."/>
            <person name="Itoh N."/>
        </authorList>
    </citation>
    <scope>INTERACTION WITH SOSTDC1</scope>
</reference>
<reference key="6">
    <citation type="journal article" date="2012" name="PLoS ONE">
        <title>Bmp7 regulates the survival, proliferation, and neurogenic properties of neural progenitor cells during corticogenesis in the mouse.</title>
        <authorList>
            <person name="Segklia A."/>
            <person name="Seuntjens E."/>
            <person name="Elkouris M."/>
            <person name="Tsalavos S."/>
            <person name="Stappers E."/>
            <person name="Mitsiadis T.A."/>
            <person name="Huylebroeck D."/>
            <person name="Remboutsika E."/>
            <person name="Graf D."/>
        </authorList>
    </citation>
    <scope>FUNCTION</scope>
    <scope>DISRUPTION PHENOTYPE</scope>
</reference>
<reference key="7">
    <citation type="journal article" date="2018" name="Blood">
        <title>Erythroferrone inhibits the induction of hepcidin by BMP6.</title>
        <authorList>
            <person name="Arezes J."/>
            <person name="Foy N."/>
            <person name="McHugh K."/>
            <person name="Sawant A."/>
            <person name="Quinkert D."/>
            <person name="Terraube V."/>
            <person name="Brinth A."/>
            <person name="Tam M."/>
            <person name="LaVallie E.R."/>
            <person name="Taylor S."/>
            <person name="Armitage A.E."/>
            <person name="Pasricha S.R."/>
            <person name="Cunningham O."/>
            <person name="Lambert M."/>
            <person name="Draper S.J."/>
            <person name="Jasuja R."/>
            <person name="Drakesmith H."/>
        </authorList>
    </citation>
    <scope>FUNCTION</scope>
    <scope>INTERACTION WITH ERFE</scope>
</reference>
<evidence type="ECO:0000250" key="1"/>
<evidence type="ECO:0000250" key="2">
    <source>
        <dbReference type="UniProtKB" id="P18075"/>
    </source>
</evidence>
<evidence type="ECO:0000255" key="3"/>
<evidence type="ECO:0000256" key="4">
    <source>
        <dbReference type="SAM" id="MobiDB-lite"/>
    </source>
</evidence>
<evidence type="ECO:0000269" key="5">
    <source>
    </source>
</evidence>
<evidence type="ECO:0000269" key="6">
    <source>
    </source>
</evidence>
<evidence type="ECO:0000269" key="7">
    <source>
    </source>
</evidence>
<evidence type="ECO:0000269" key="8">
    <source>
    </source>
</evidence>
<evidence type="ECO:0000269" key="9">
    <source>
    </source>
</evidence>
<evidence type="ECO:0000305" key="10"/>
<proteinExistence type="evidence at protein level"/>
<dbReference type="EMBL" id="X56906">
    <property type="protein sequence ID" value="CAA40222.1"/>
    <property type="molecule type" value="mRNA"/>
</dbReference>
<dbReference type="EMBL" id="BC010771">
    <property type="protein sequence ID" value="AAH10771.1"/>
    <property type="molecule type" value="mRNA"/>
</dbReference>
<dbReference type="CCDS" id="CCDS17136.1"/>
<dbReference type="PIR" id="JQ1184">
    <property type="entry name" value="JQ1184"/>
</dbReference>
<dbReference type="RefSeq" id="NP_031583.2">
    <property type="nucleotide sequence ID" value="NM_007557.3"/>
</dbReference>
<dbReference type="SMR" id="P23359"/>
<dbReference type="BioGRID" id="198367">
    <property type="interactions" value="3"/>
</dbReference>
<dbReference type="FunCoup" id="P23359">
    <property type="interactions" value="570"/>
</dbReference>
<dbReference type="STRING" id="10090.ENSMUSP00000009143"/>
<dbReference type="GlyCosmos" id="P23359">
    <property type="glycosylation" value="4 sites, No reported glycans"/>
</dbReference>
<dbReference type="GlyGen" id="P23359">
    <property type="glycosylation" value="4 sites, 2 N-linked glycans (2 sites)"/>
</dbReference>
<dbReference type="iPTMnet" id="P23359"/>
<dbReference type="PhosphoSitePlus" id="P23359"/>
<dbReference type="SwissPalm" id="P23359"/>
<dbReference type="jPOST" id="P23359"/>
<dbReference type="PaxDb" id="10090-ENSMUSP00000009143"/>
<dbReference type="ProteomicsDB" id="281698"/>
<dbReference type="Antibodypedia" id="14123">
    <property type="antibodies" value="928 antibodies from 45 providers"/>
</dbReference>
<dbReference type="DNASU" id="12162"/>
<dbReference type="Ensembl" id="ENSMUST00000009143.8">
    <property type="protein sequence ID" value="ENSMUSP00000009143.8"/>
    <property type="gene ID" value="ENSMUSG00000008999.8"/>
</dbReference>
<dbReference type="GeneID" id="12162"/>
<dbReference type="KEGG" id="mmu:12162"/>
<dbReference type="UCSC" id="uc008odb.3">
    <property type="organism name" value="mouse"/>
</dbReference>
<dbReference type="AGR" id="MGI:103302"/>
<dbReference type="CTD" id="655"/>
<dbReference type="MGI" id="MGI:103302">
    <property type="gene designation" value="Bmp7"/>
</dbReference>
<dbReference type="VEuPathDB" id="HostDB:ENSMUSG00000008999"/>
<dbReference type="eggNOG" id="KOG3900">
    <property type="taxonomic scope" value="Eukaryota"/>
</dbReference>
<dbReference type="GeneTree" id="ENSGT00940000156490"/>
<dbReference type="HOGENOM" id="CLU_020515_4_1_1"/>
<dbReference type="InParanoid" id="P23359"/>
<dbReference type="OMA" id="WLTANKQ"/>
<dbReference type="OrthoDB" id="5987191at2759"/>
<dbReference type="PhylomeDB" id="P23359"/>
<dbReference type="TreeFam" id="TF316134"/>
<dbReference type="Reactome" id="R-MMU-2129379">
    <property type="pathway name" value="Molecules associated with elastic fibres"/>
</dbReference>
<dbReference type="BioGRID-ORCS" id="12162">
    <property type="hits" value="2 hits in 79 CRISPR screens"/>
</dbReference>
<dbReference type="ChiTaRS" id="Bmp7">
    <property type="organism name" value="mouse"/>
</dbReference>
<dbReference type="PRO" id="PR:P23359"/>
<dbReference type="Proteomes" id="UP000000589">
    <property type="component" value="Chromosome 2"/>
</dbReference>
<dbReference type="RNAct" id="P23359">
    <property type="molecule type" value="protein"/>
</dbReference>
<dbReference type="Bgee" id="ENSMUSG00000008999">
    <property type="expression patterns" value="Expressed in molar tooth and 282 other cell types or tissues"/>
</dbReference>
<dbReference type="GO" id="GO:0005615">
    <property type="term" value="C:extracellular space"/>
    <property type="evidence" value="ECO:0000314"/>
    <property type="project" value="MGI"/>
</dbReference>
<dbReference type="GO" id="GO:0031982">
    <property type="term" value="C:vesicle"/>
    <property type="evidence" value="ECO:0007669"/>
    <property type="project" value="Ensembl"/>
</dbReference>
<dbReference type="GO" id="GO:0070700">
    <property type="term" value="F:BMP receptor binding"/>
    <property type="evidence" value="ECO:0000266"/>
    <property type="project" value="MGI"/>
</dbReference>
<dbReference type="GO" id="GO:0005125">
    <property type="term" value="F:cytokine activity"/>
    <property type="evidence" value="ECO:0000304"/>
    <property type="project" value="MGI"/>
</dbReference>
<dbReference type="GO" id="GO:0008083">
    <property type="term" value="F:growth factor activity"/>
    <property type="evidence" value="ECO:0007669"/>
    <property type="project" value="UniProtKB-KW"/>
</dbReference>
<dbReference type="GO" id="GO:0008201">
    <property type="term" value="F:heparin binding"/>
    <property type="evidence" value="ECO:0007669"/>
    <property type="project" value="Ensembl"/>
</dbReference>
<dbReference type="GO" id="GO:0043539">
    <property type="term" value="F:protein serine/threonine kinase activator activity"/>
    <property type="evidence" value="ECO:0007669"/>
    <property type="project" value="Ensembl"/>
</dbReference>
<dbReference type="GO" id="GO:1905069">
    <property type="term" value="P:allantois development"/>
    <property type="evidence" value="ECO:0000316"/>
    <property type="project" value="BHF-UCL"/>
</dbReference>
<dbReference type="GO" id="GO:0036305">
    <property type="term" value="P:ameloblast differentiation"/>
    <property type="evidence" value="ECO:0000314"/>
    <property type="project" value="MGI"/>
</dbReference>
<dbReference type="GO" id="GO:0048646">
    <property type="term" value="P:anatomical structure formation involved in morphogenesis"/>
    <property type="evidence" value="ECO:0000315"/>
    <property type="project" value="MGI"/>
</dbReference>
<dbReference type="GO" id="GO:0009887">
    <property type="term" value="P:animal organ morphogenesis"/>
    <property type="evidence" value="ECO:0000315"/>
    <property type="project" value="MGI"/>
</dbReference>
<dbReference type="GO" id="GO:0007411">
    <property type="term" value="P:axon guidance"/>
    <property type="evidence" value="ECO:0000314"/>
    <property type="project" value="MGI"/>
</dbReference>
<dbReference type="GO" id="GO:0030509">
    <property type="term" value="P:BMP signaling pathway"/>
    <property type="evidence" value="ECO:0000314"/>
    <property type="project" value="MGI"/>
</dbReference>
<dbReference type="GO" id="GO:0060445">
    <property type="term" value="P:branching involved in salivary gland morphogenesis"/>
    <property type="evidence" value="ECO:0000315"/>
    <property type="project" value="MGI"/>
</dbReference>
<dbReference type="GO" id="GO:0048754">
    <property type="term" value="P:branching morphogenesis of an epithelial tube"/>
    <property type="evidence" value="ECO:0000314"/>
    <property type="project" value="MGI"/>
</dbReference>
<dbReference type="GO" id="GO:0048593">
    <property type="term" value="P:camera-type eye morphogenesis"/>
    <property type="evidence" value="ECO:0000315"/>
    <property type="project" value="MGI"/>
</dbReference>
<dbReference type="GO" id="GO:0048738">
    <property type="term" value="P:cardiac muscle tissue development"/>
    <property type="evidence" value="ECO:0000316"/>
    <property type="project" value="BHF-UCL"/>
</dbReference>
<dbReference type="GO" id="GO:0060411">
    <property type="term" value="P:cardiac septum morphogenesis"/>
    <property type="evidence" value="ECO:0000316"/>
    <property type="project" value="BHF-UCL"/>
</dbReference>
<dbReference type="GO" id="GO:0051216">
    <property type="term" value="P:cartilage development"/>
    <property type="evidence" value="ECO:0007669"/>
    <property type="project" value="UniProtKB-KW"/>
</dbReference>
<dbReference type="GO" id="GO:0048468">
    <property type="term" value="P:cell development"/>
    <property type="evidence" value="ECO:0000314"/>
    <property type="project" value="MGI"/>
</dbReference>
<dbReference type="GO" id="GO:0008283">
    <property type="term" value="P:cell population proliferation"/>
    <property type="evidence" value="ECO:0000315"/>
    <property type="project" value="MGI"/>
</dbReference>
<dbReference type="GO" id="GO:0060710">
    <property type="term" value="P:chorio-allantoic fusion"/>
    <property type="evidence" value="ECO:0000316"/>
    <property type="project" value="BHF-UCL"/>
</dbReference>
<dbReference type="GO" id="GO:0048596">
    <property type="term" value="P:embryonic camera-type eye morphogenesis"/>
    <property type="evidence" value="ECO:0000315"/>
    <property type="project" value="MGI"/>
</dbReference>
<dbReference type="GO" id="GO:0030326">
    <property type="term" value="P:embryonic limb morphogenesis"/>
    <property type="evidence" value="ECO:0000315"/>
    <property type="project" value="MGI"/>
</dbReference>
<dbReference type="GO" id="GO:0009880">
    <property type="term" value="P:embryonic pattern specification"/>
    <property type="evidence" value="ECO:0000315"/>
    <property type="project" value="MGI"/>
</dbReference>
<dbReference type="GO" id="GO:0060272">
    <property type="term" value="P:embryonic skeletal joint morphogenesis"/>
    <property type="evidence" value="ECO:0000315"/>
    <property type="project" value="MGI"/>
</dbReference>
<dbReference type="GO" id="GO:0003272">
    <property type="term" value="P:endocardial cushion formation"/>
    <property type="evidence" value="ECO:0000316"/>
    <property type="project" value="BHF-UCL"/>
</dbReference>
<dbReference type="GO" id="GO:0030855">
    <property type="term" value="P:epithelial cell differentiation"/>
    <property type="evidence" value="ECO:0000315"/>
    <property type="project" value="MGI"/>
</dbReference>
<dbReference type="GO" id="GO:0001654">
    <property type="term" value="P:eye development"/>
    <property type="evidence" value="ECO:0000315"/>
    <property type="project" value="UniProtKB"/>
</dbReference>
<dbReference type="GO" id="GO:0061384">
    <property type="term" value="P:heart trabecula morphogenesis"/>
    <property type="evidence" value="ECO:0000316"/>
    <property type="project" value="BHF-UCL"/>
</dbReference>
<dbReference type="GO" id="GO:0030902">
    <property type="term" value="P:hindbrain development"/>
    <property type="evidence" value="ECO:0000316"/>
    <property type="project" value="BHF-UCL"/>
</dbReference>
<dbReference type="GO" id="GO:0001822">
    <property type="term" value="P:kidney development"/>
    <property type="evidence" value="ECO:0000315"/>
    <property type="project" value="UniProtKB"/>
</dbReference>
<dbReference type="GO" id="GO:1901145">
    <property type="term" value="P:mesenchymal cell apoptotic process involved in nephron morphogenesis"/>
    <property type="evidence" value="ECO:0000315"/>
    <property type="project" value="MGI"/>
</dbReference>
<dbReference type="GO" id="GO:0048762">
    <property type="term" value="P:mesenchymal cell differentiation"/>
    <property type="evidence" value="ECO:0000250"/>
    <property type="project" value="UniProtKB"/>
</dbReference>
<dbReference type="GO" id="GO:0060485">
    <property type="term" value="P:mesenchyme development"/>
    <property type="evidence" value="ECO:0000315"/>
    <property type="project" value="UniProtKB"/>
</dbReference>
<dbReference type="GO" id="GO:0001707">
    <property type="term" value="P:mesoderm formation"/>
    <property type="evidence" value="ECO:0000316"/>
    <property type="project" value="MGI"/>
</dbReference>
<dbReference type="GO" id="GO:0072136">
    <property type="term" value="P:metanephric mesenchymal cell proliferation involved in metanephros development"/>
    <property type="evidence" value="ECO:0000316"/>
    <property type="project" value="UniProtKB"/>
</dbReference>
<dbReference type="GO" id="GO:0072133">
    <property type="term" value="P:metanephric mesenchyme morphogenesis"/>
    <property type="evidence" value="ECO:0000316"/>
    <property type="project" value="UniProtKB"/>
</dbReference>
<dbReference type="GO" id="GO:0070487">
    <property type="term" value="P:monocyte aggregation"/>
    <property type="evidence" value="ECO:0007669"/>
    <property type="project" value="Ensembl"/>
</dbReference>
<dbReference type="GO" id="GO:0008285">
    <property type="term" value="P:negative regulation of cell population proliferation"/>
    <property type="evidence" value="ECO:0000315"/>
    <property type="project" value="MGI"/>
</dbReference>
<dbReference type="GO" id="GO:0045892">
    <property type="term" value="P:negative regulation of DNA-templated transcription"/>
    <property type="evidence" value="ECO:0007669"/>
    <property type="project" value="Ensembl"/>
</dbReference>
<dbReference type="GO" id="GO:0072125">
    <property type="term" value="P:negative regulation of glomerular mesangial cell proliferation"/>
    <property type="evidence" value="ECO:0000250"/>
    <property type="project" value="UniProtKB"/>
</dbReference>
<dbReference type="GO" id="GO:0072040">
    <property type="term" value="P:negative regulation of mesenchymal cell apoptotic process involved in nephron morphogenesis"/>
    <property type="evidence" value="ECO:0000315"/>
    <property type="project" value="MGI"/>
</dbReference>
<dbReference type="GO" id="GO:0045839">
    <property type="term" value="P:negative regulation of mitotic nuclear division"/>
    <property type="evidence" value="ECO:0000250"/>
    <property type="project" value="UniProtKB"/>
</dbReference>
<dbReference type="GO" id="GO:0050768">
    <property type="term" value="P:negative regulation of neurogenesis"/>
    <property type="evidence" value="ECO:0000314"/>
    <property type="project" value="MGI"/>
</dbReference>
<dbReference type="GO" id="GO:0045665">
    <property type="term" value="P:negative regulation of neuron differentiation"/>
    <property type="evidence" value="ECO:0000315"/>
    <property type="project" value="MGI"/>
</dbReference>
<dbReference type="GO" id="GO:0045746">
    <property type="term" value="P:negative regulation of Notch signaling pathway"/>
    <property type="evidence" value="ECO:0000316"/>
    <property type="project" value="MGI"/>
</dbReference>
<dbReference type="GO" id="GO:0060686">
    <property type="term" value="P:negative regulation of prostatic bud formation"/>
    <property type="evidence" value="ECO:0000314"/>
    <property type="project" value="MGI"/>
</dbReference>
<dbReference type="GO" id="GO:0072134">
    <property type="term" value="P:nephrogenic mesenchyme morphogenesis"/>
    <property type="evidence" value="ECO:0000316"/>
    <property type="project" value="UniProtKB"/>
</dbReference>
<dbReference type="GO" id="GO:0021502">
    <property type="term" value="P:neural fold elevation formation"/>
    <property type="evidence" value="ECO:0000316"/>
    <property type="project" value="BHF-UCL"/>
</dbReference>
<dbReference type="GO" id="GO:0048812">
    <property type="term" value="P:neuron projection morphogenesis"/>
    <property type="evidence" value="ECO:0000315"/>
    <property type="project" value="MGI"/>
</dbReference>
<dbReference type="GO" id="GO:0042475">
    <property type="term" value="P:odontogenesis of dentin-containing tooth"/>
    <property type="evidence" value="ECO:0000314"/>
    <property type="project" value="MGI"/>
</dbReference>
<dbReference type="GO" id="GO:0001649">
    <property type="term" value="P:osteoblast differentiation"/>
    <property type="evidence" value="ECO:0007669"/>
    <property type="project" value="Ensembl"/>
</dbReference>
<dbReference type="GO" id="GO:0007389">
    <property type="term" value="P:pattern specification process"/>
    <property type="evidence" value="ECO:0000315"/>
    <property type="project" value="MGI"/>
</dbReference>
<dbReference type="GO" id="GO:0003344">
    <property type="term" value="P:pericardium morphogenesis"/>
    <property type="evidence" value="ECO:0000316"/>
    <property type="project" value="BHF-UCL"/>
</dbReference>
<dbReference type="GO" id="GO:0060037">
    <property type="term" value="P:pharyngeal system development"/>
    <property type="evidence" value="ECO:0000316"/>
    <property type="project" value="BHF-UCL"/>
</dbReference>
<dbReference type="GO" id="GO:0043065">
    <property type="term" value="P:positive regulation of apoptotic process"/>
    <property type="evidence" value="ECO:0000315"/>
    <property type="project" value="MGI"/>
</dbReference>
<dbReference type="GO" id="GO:0030501">
    <property type="term" value="P:positive regulation of bone mineralization"/>
    <property type="evidence" value="ECO:0007669"/>
    <property type="project" value="Ensembl"/>
</dbReference>
<dbReference type="GO" id="GO:0090336">
    <property type="term" value="P:positive regulation of brown fat cell differentiation"/>
    <property type="evidence" value="ECO:0000250"/>
    <property type="project" value="UniProtKB"/>
</dbReference>
<dbReference type="GO" id="GO:1905312">
    <property type="term" value="P:positive regulation of cardiac neural crest cell migration involved in outflow tract morphogenesis"/>
    <property type="evidence" value="ECO:0000316"/>
    <property type="project" value="BHF-UCL"/>
</dbReference>
<dbReference type="GO" id="GO:1900006">
    <property type="term" value="P:positive regulation of dendrite development"/>
    <property type="evidence" value="ECO:0007669"/>
    <property type="project" value="Ensembl"/>
</dbReference>
<dbReference type="GO" id="GO:0045893">
    <property type="term" value="P:positive regulation of DNA-templated transcription"/>
    <property type="evidence" value="ECO:0000250"/>
    <property type="project" value="UniProtKB"/>
</dbReference>
<dbReference type="GO" id="GO:0030858">
    <property type="term" value="P:positive regulation of epithelial cell differentiation"/>
    <property type="evidence" value="ECO:0000314"/>
    <property type="project" value="MGI"/>
</dbReference>
<dbReference type="GO" id="GO:0010718">
    <property type="term" value="P:positive regulation of epithelial to mesenchymal transition"/>
    <property type="evidence" value="ECO:0000316"/>
    <property type="project" value="BHF-UCL"/>
</dbReference>
<dbReference type="GO" id="GO:0010628">
    <property type="term" value="P:positive regulation of gene expression"/>
    <property type="evidence" value="ECO:0007669"/>
    <property type="project" value="Ensembl"/>
</dbReference>
<dbReference type="GO" id="GO:0034116">
    <property type="term" value="P:positive regulation of heterotypic cell-cell adhesion"/>
    <property type="evidence" value="ECO:0007669"/>
    <property type="project" value="Ensembl"/>
</dbReference>
<dbReference type="GO" id="GO:1900106">
    <property type="term" value="P:positive regulation of hyaluranon cable assembly"/>
    <property type="evidence" value="ECO:0007669"/>
    <property type="project" value="Ensembl"/>
</dbReference>
<dbReference type="GO" id="GO:0045666">
    <property type="term" value="P:positive regulation of neuron differentiation"/>
    <property type="evidence" value="ECO:0000314"/>
    <property type="project" value="MGI"/>
</dbReference>
<dbReference type="GO" id="GO:0045669">
    <property type="term" value="P:positive regulation of osteoblast differentiation"/>
    <property type="evidence" value="ECO:0007669"/>
    <property type="project" value="Ensembl"/>
</dbReference>
<dbReference type="GO" id="GO:0060391">
    <property type="term" value="P:positive regulation of SMAD protein signal transduction"/>
    <property type="evidence" value="ECO:0007669"/>
    <property type="project" value="Ensembl"/>
</dbReference>
<dbReference type="GO" id="GO:0045944">
    <property type="term" value="P:positive regulation of transcription by RNA polymerase II"/>
    <property type="evidence" value="ECO:0000316"/>
    <property type="project" value="MGI"/>
</dbReference>
<dbReference type="GO" id="GO:0060687">
    <property type="term" value="P:regulation of branching involved in prostate gland morphogenesis"/>
    <property type="evidence" value="ECO:0000315"/>
    <property type="project" value="MGI"/>
</dbReference>
<dbReference type="GO" id="GO:0032355">
    <property type="term" value="P:response to estradiol"/>
    <property type="evidence" value="ECO:0007669"/>
    <property type="project" value="Ensembl"/>
</dbReference>
<dbReference type="GO" id="GO:0043434">
    <property type="term" value="P:response to peptide hormone"/>
    <property type="evidence" value="ECO:0007669"/>
    <property type="project" value="Ensembl"/>
</dbReference>
<dbReference type="GO" id="GO:0033280">
    <property type="term" value="P:response to vitamin D"/>
    <property type="evidence" value="ECO:0007669"/>
    <property type="project" value="Ensembl"/>
</dbReference>
<dbReference type="GO" id="GO:0007435">
    <property type="term" value="P:salivary gland morphogenesis"/>
    <property type="evidence" value="ECO:0000315"/>
    <property type="project" value="MGI"/>
</dbReference>
<dbReference type="GO" id="GO:0035239">
    <property type="term" value="P:tube morphogenesis"/>
    <property type="evidence" value="ECO:0000314"/>
    <property type="project" value="MGI"/>
</dbReference>
<dbReference type="GO" id="GO:0001657">
    <property type="term" value="P:ureteric bud development"/>
    <property type="evidence" value="ECO:0000315"/>
    <property type="project" value="UniProtKB"/>
</dbReference>
<dbReference type="CDD" id="cd19397">
    <property type="entry name" value="TGF_beta_BMP7"/>
    <property type="match status" value="1"/>
</dbReference>
<dbReference type="FunFam" id="2.10.90.10:FF:000003">
    <property type="entry name" value="Bone morphogenetic protein 5"/>
    <property type="match status" value="1"/>
</dbReference>
<dbReference type="FunFam" id="2.60.120.970:FF:000008">
    <property type="entry name" value="Bone morphogenetic protein 7"/>
    <property type="match status" value="1"/>
</dbReference>
<dbReference type="Gene3D" id="2.60.120.970">
    <property type="match status" value="1"/>
</dbReference>
<dbReference type="Gene3D" id="2.10.90.10">
    <property type="entry name" value="Cystine-knot cytokines"/>
    <property type="match status" value="1"/>
</dbReference>
<dbReference type="InterPro" id="IPR029034">
    <property type="entry name" value="Cystine-knot_cytokine"/>
</dbReference>
<dbReference type="InterPro" id="IPR001839">
    <property type="entry name" value="TGF-b_C"/>
</dbReference>
<dbReference type="InterPro" id="IPR001111">
    <property type="entry name" value="TGF-b_propeptide"/>
</dbReference>
<dbReference type="InterPro" id="IPR015615">
    <property type="entry name" value="TGF-beta-rel"/>
</dbReference>
<dbReference type="InterPro" id="IPR017948">
    <property type="entry name" value="TGFb_CS"/>
</dbReference>
<dbReference type="PANTHER" id="PTHR11848:SF135">
    <property type="entry name" value="BONE MORPHOGENETIC PROTEIN 7"/>
    <property type="match status" value="1"/>
</dbReference>
<dbReference type="PANTHER" id="PTHR11848">
    <property type="entry name" value="TGF-BETA FAMILY"/>
    <property type="match status" value="1"/>
</dbReference>
<dbReference type="Pfam" id="PF00019">
    <property type="entry name" value="TGF_beta"/>
    <property type="match status" value="1"/>
</dbReference>
<dbReference type="Pfam" id="PF00688">
    <property type="entry name" value="TGFb_propeptide"/>
    <property type="match status" value="1"/>
</dbReference>
<dbReference type="SMART" id="SM00204">
    <property type="entry name" value="TGFB"/>
    <property type="match status" value="1"/>
</dbReference>
<dbReference type="SUPFAM" id="SSF57501">
    <property type="entry name" value="Cystine-knot cytokines"/>
    <property type="match status" value="1"/>
</dbReference>
<dbReference type="PROSITE" id="PS00250">
    <property type="entry name" value="TGF_BETA_1"/>
    <property type="match status" value="1"/>
</dbReference>
<dbReference type="PROSITE" id="PS51362">
    <property type="entry name" value="TGF_BETA_2"/>
    <property type="match status" value="1"/>
</dbReference>
<accession>P23359</accession>
<accession>Q91XF7</accession>
<protein>
    <recommendedName>
        <fullName>Bone morphogenetic protein 7</fullName>
        <shortName>BMP-7</shortName>
    </recommendedName>
    <alternativeName>
        <fullName>Osteogenic protein 1</fullName>
        <shortName>OP-1</shortName>
    </alternativeName>
</protein>
<gene>
    <name type="primary">Bmp7</name>
    <name type="synonym">Bmp-7</name>
    <name type="synonym">Op1</name>
</gene>
<organism>
    <name type="scientific">Mus musculus</name>
    <name type="common">Mouse</name>
    <dbReference type="NCBI Taxonomy" id="10090"/>
    <lineage>
        <taxon>Eukaryota</taxon>
        <taxon>Metazoa</taxon>
        <taxon>Chordata</taxon>
        <taxon>Craniata</taxon>
        <taxon>Vertebrata</taxon>
        <taxon>Euteleostomi</taxon>
        <taxon>Mammalia</taxon>
        <taxon>Eutheria</taxon>
        <taxon>Euarchontoglires</taxon>
        <taxon>Glires</taxon>
        <taxon>Rodentia</taxon>
        <taxon>Myomorpha</taxon>
        <taxon>Muroidea</taxon>
        <taxon>Muridae</taxon>
        <taxon>Murinae</taxon>
        <taxon>Mus</taxon>
        <taxon>Mus</taxon>
    </lineage>
</organism>
<feature type="signal peptide" evidence="3">
    <location>
        <begin position="1"/>
        <end position="29"/>
    </location>
</feature>
<feature type="propeptide" id="PRO_0000033878" evidence="1">
    <location>
        <begin position="30"/>
        <end position="291"/>
    </location>
</feature>
<feature type="chain" id="PRO_0000033879" description="Bone morphogenetic protein 7">
    <location>
        <begin position="292"/>
        <end position="430"/>
    </location>
</feature>
<feature type="region of interest" description="Disordered" evidence="4">
    <location>
        <begin position="290"/>
        <end position="310"/>
    </location>
</feature>
<feature type="glycosylation site" description="N-linked (GlcNAc...) asparagine" evidence="3">
    <location>
        <position position="186"/>
    </location>
</feature>
<feature type="glycosylation site" description="N-linked (GlcNAc...) asparagine" evidence="3">
    <location>
        <position position="301"/>
    </location>
</feature>
<feature type="glycosylation site" description="N-linked (GlcNAc...) asparagine" evidence="3">
    <location>
        <position position="320"/>
    </location>
</feature>
<feature type="glycosylation site" description="N-linked (GlcNAc...) asparagine" evidence="3">
    <location>
        <position position="371"/>
    </location>
</feature>
<feature type="disulfide bond" evidence="1">
    <location>
        <begin position="329"/>
        <end position="395"/>
    </location>
</feature>
<feature type="disulfide bond" evidence="1">
    <location>
        <begin position="358"/>
        <end position="427"/>
    </location>
</feature>
<feature type="disulfide bond" evidence="1">
    <location>
        <begin position="362"/>
        <end position="429"/>
    </location>
</feature>
<feature type="disulfide bond" description="Interchain" evidence="1">
    <location>
        <position position="394"/>
    </location>
</feature>
<feature type="sequence conflict" description="In Ref. 1; CAA40222." evidence="10" ref="1">
    <original>A</original>
    <variation>R</variation>
    <location>
        <position position="167"/>
    </location>
</feature>
<comment type="function">
    <text evidence="2 7 8 9">Growth factor of the TGF-beta superfamily that plays important role in various biological processes, including embryogenesis, hematopoiesis, neurogenesis and skeletal morphogenesis (PubMed:22461901, PubMed:9013703). Initiates the canonical BMP signaling cascade by associating with type I receptor ACVR1 and type II receptor ACVR2A. Once all three components are bound together in a complex at the cell surface, ACVR2A phosphorylates and activates ACVR1. In turn, ACVR1 propagates signal by phosphorylating SMAD1/5/8 that travel to the nucleus and act as activators and repressors of transcription of target genes. For specific functions such as growth cone collapse in developing spinal neurons and chemotaxis of monocytes, also uses BMPR2 as type II receptor. Can also signal through non-canonical pathways such as P38 MAP kinase signaling cascade that promotes brown adipocyte differentiation through activation of target genes, including members of the SOX family of transcription factors (By similarity). Promotes the expression of HAMP, this is repressed by its interaction with ERFE (PubMed:30097509).</text>
</comment>
<comment type="subunit">
    <text evidence="2 5 6 8">Homodimer; disulfide-linked (By similarity). Interacts with SOSTDC1 (PubMed:14623234). Interacts with TWSG1 (PubMed:15843411). Interacts with FBN1 (via N-terminal domain) and FBN2 (By similarity). Interacts with type I receptor ACVR1 (By similarity). Interacts with type II receptor ACVR2A (By similarity). Interacts with NOG; this interaction inhibits canonical BMP signaling (By similarity). Interacts with SCUBE3 (By similarity). Interacts with ERFE; the interaction inhibits BMP-induced transcription of HAMP (PubMed:30097509). Interacts with TGFBR3 (By similarity).</text>
</comment>
<comment type="subcellular location">
    <subcellularLocation>
        <location evidence="1">Secreted</location>
    </subcellularLocation>
</comment>
<comment type="disruption phenotype">
    <text evidence="7">nullDeltion mutant mice die shortly after birth and display developmental defects in kidney, eye, skull, ribcage, and hind limbs. They also show defects in the development of the axial skeleton from the skull to the tail and the ossification of bones.</text>
</comment>
<comment type="similarity">
    <text evidence="10">Belongs to the TGF-beta family.</text>
</comment>
<sequence length="430" mass="49199">MHVRSLRAAAPHSFVALWAPLFLLRSALADFSLDNEVHSSFIHRRLRSQERREMQREILSILGLPHRPRPHLQGKHNSAPMFMLDLYNAMAVEESGPDGQGFSYPYKAVFSTQGPPLASLQDSHFLTDADMVMSFVNLVEHDKEFFHPRYHHREFRFDLSKIPEGEAVTAAEFRIYKDYIRERFDNETFQITVYQVLQEHSGRESDLFLLDSRTIWASEEGWLVFDITATSNHWVVNPRHNLGLQLSVETLDGQSINPKLAGLIGRHGPQNKQPFMVAFFKATEVHLRSIRSTGGKQRSQNRSKTPKNQEALRMASVAENSSSDQRQACKKHELYVSFRDLGWQDWIIAPEGYAAYYCEGECAFPLNSYMNATNHAIVQTLVHFINPDTVPKPCCAPTQLNAISVLYFDDSSNVILKKYRNMVVRACGCH</sequence>
<keyword id="KW-0891">Chondrogenesis</keyword>
<keyword id="KW-0202">Cytokine</keyword>
<keyword id="KW-0217">Developmental protein</keyword>
<keyword id="KW-0221">Differentiation</keyword>
<keyword id="KW-1015">Disulfide bond</keyword>
<keyword id="KW-0325">Glycoprotein</keyword>
<keyword id="KW-0339">Growth factor</keyword>
<keyword id="KW-0892">Osteogenesis</keyword>
<keyword id="KW-1185">Reference proteome</keyword>
<keyword id="KW-0964">Secreted</keyword>
<keyword id="KW-0732">Signal</keyword>